<evidence type="ECO:0000250" key="1">
    <source>
        <dbReference type="UniProtKB" id="Q60641"/>
    </source>
</evidence>
<evidence type="ECO:0000250" key="2">
    <source>
        <dbReference type="UniProtKB" id="Q96RI1"/>
    </source>
</evidence>
<evidence type="ECO:0000255" key="3">
    <source>
        <dbReference type="PROSITE-ProRule" id="PRU00407"/>
    </source>
</evidence>
<evidence type="ECO:0000255" key="4">
    <source>
        <dbReference type="PROSITE-ProRule" id="PRU01189"/>
    </source>
</evidence>
<evidence type="ECO:0000256" key="5">
    <source>
        <dbReference type="SAM" id="MobiDB-lite"/>
    </source>
</evidence>
<evidence type="ECO:0000305" key="6"/>
<dbReference type="EMBL" id="BC102805">
    <property type="protein sequence ID" value="AAI02806.1"/>
    <property type="molecule type" value="mRNA"/>
</dbReference>
<dbReference type="RefSeq" id="NP_001029880.1">
    <property type="nucleotide sequence ID" value="NM_001034708.2"/>
</dbReference>
<dbReference type="SMR" id="Q3SZL0"/>
<dbReference type="FunCoup" id="Q3SZL0">
    <property type="interactions" value="49"/>
</dbReference>
<dbReference type="STRING" id="9913.ENSBTAP00000018079"/>
<dbReference type="PaxDb" id="9913-ENSBTAP00000018079"/>
<dbReference type="GeneID" id="540528"/>
<dbReference type="KEGG" id="bta:540528"/>
<dbReference type="CTD" id="9971"/>
<dbReference type="eggNOG" id="KOG3575">
    <property type="taxonomic scope" value="Eukaryota"/>
</dbReference>
<dbReference type="InParanoid" id="Q3SZL0"/>
<dbReference type="OrthoDB" id="5837785at2759"/>
<dbReference type="Proteomes" id="UP000009136">
    <property type="component" value="Unplaced"/>
</dbReference>
<dbReference type="GO" id="GO:0005634">
    <property type="term" value="C:nucleus"/>
    <property type="evidence" value="ECO:0000318"/>
    <property type="project" value="GO_Central"/>
</dbReference>
<dbReference type="GO" id="GO:0090575">
    <property type="term" value="C:RNA polymerase II transcription regulator complex"/>
    <property type="evidence" value="ECO:0000318"/>
    <property type="project" value="GO_Central"/>
</dbReference>
<dbReference type="GO" id="GO:0032052">
    <property type="term" value="F:bile acid binding"/>
    <property type="evidence" value="ECO:0000318"/>
    <property type="project" value="GO_Central"/>
</dbReference>
<dbReference type="GO" id="GO:0004879">
    <property type="term" value="F:nuclear receptor activity"/>
    <property type="evidence" value="ECO:0000318"/>
    <property type="project" value="GO_Central"/>
</dbReference>
<dbReference type="GO" id="GO:0000978">
    <property type="term" value="F:RNA polymerase II cis-regulatory region sequence-specific DNA binding"/>
    <property type="evidence" value="ECO:0000318"/>
    <property type="project" value="GO_Central"/>
</dbReference>
<dbReference type="GO" id="GO:0008270">
    <property type="term" value="F:zinc ion binding"/>
    <property type="evidence" value="ECO:0007669"/>
    <property type="project" value="UniProtKB-KW"/>
</dbReference>
<dbReference type="GO" id="GO:0030154">
    <property type="term" value="P:cell differentiation"/>
    <property type="evidence" value="ECO:0000318"/>
    <property type="project" value="GO_Central"/>
</dbReference>
<dbReference type="GO" id="GO:0006954">
    <property type="term" value="P:inflammatory response"/>
    <property type="evidence" value="ECO:0007669"/>
    <property type="project" value="UniProtKB-KW"/>
</dbReference>
<dbReference type="GO" id="GO:0045087">
    <property type="term" value="P:innate immune response"/>
    <property type="evidence" value="ECO:0007669"/>
    <property type="project" value="UniProtKB-KW"/>
</dbReference>
<dbReference type="GO" id="GO:0030522">
    <property type="term" value="P:intracellular receptor signaling pathway"/>
    <property type="evidence" value="ECO:0000318"/>
    <property type="project" value="GO_Central"/>
</dbReference>
<dbReference type="GO" id="GO:0050728">
    <property type="term" value="P:negative regulation of inflammatory response"/>
    <property type="evidence" value="ECO:0000318"/>
    <property type="project" value="GO_Central"/>
</dbReference>
<dbReference type="GO" id="GO:0000122">
    <property type="term" value="P:negative regulation of transcription by RNA polymerase II"/>
    <property type="evidence" value="ECO:0000318"/>
    <property type="project" value="GO_Central"/>
</dbReference>
<dbReference type="GO" id="GO:0045944">
    <property type="term" value="P:positive regulation of transcription by RNA polymerase II"/>
    <property type="evidence" value="ECO:0000318"/>
    <property type="project" value="GO_Central"/>
</dbReference>
<dbReference type="CDD" id="cd06962">
    <property type="entry name" value="NR_DBD_FXR"/>
    <property type="match status" value="1"/>
</dbReference>
<dbReference type="CDD" id="cd06936">
    <property type="entry name" value="NR_LBD_Fxr"/>
    <property type="match status" value="1"/>
</dbReference>
<dbReference type="FunFam" id="1.10.565.10:FF:000018">
    <property type="entry name" value="Bile acid receptor isoform 4"/>
    <property type="match status" value="1"/>
</dbReference>
<dbReference type="FunFam" id="3.30.50.10:FF:000021">
    <property type="entry name" value="bile acid receptor isoform X2"/>
    <property type="match status" value="1"/>
</dbReference>
<dbReference type="Gene3D" id="3.30.50.10">
    <property type="entry name" value="Erythroid Transcription Factor GATA-1, subunit A"/>
    <property type="match status" value="1"/>
</dbReference>
<dbReference type="Gene3D" id="1.10.565.10">
    <property type="entry name" value="Retinoid X Receptor"/>
    <property type="match status" value="1"/>
</dbReference>
<dbReference type="InterPro" id="IPR035500">
    <property type="entry name" value="NHR-like_dom_sf"/>
</dbReference>
<dbReference type="InterPro" id="IPR044114">
    <property type="entry name" value="NR_LBD_NR1H4"/>
</dbReference>
<dbReference type="InterPro" id="IPR000536">
    <property type="entry name" value="Nucl_hrmn_rcpt_lig-bd"/>
</dbReference>
<dbReference type="InterPro" id="IPR050234">
    <property type="entry name" value="Nuclear_hormone_rcpt_NR1"/>
</dbReference>
<dbReference type="InterPro" id="IPR001723">
    <property type="entry name" value="Nuclear_hrmn_rcpt"/>
</dbReference>
<dbReference type="InterPro" id="IPR001728">
    <property type="entry name" value="ThyrH_rcpt"/>
</dbReference>
<dbReference type="InterPro" id="IPR001628">
    <property type="entry name" value="Znf_hrmn_rcpt"/>
</dbReference>
<dbReference type="InterPro" id="IPR013088">
    <property type="entry name" value="Znf_NHR/GATA"/>
</dbReference>
<dbReference type="PANTHER" id="PTHR24082:SF155">
    <property type="entry name" value="BILE ACID RECEPTOR"/>
    <property type="match status" value="1"/>
</dbReference>
<dbReference type="PANTHER" id="PTHR24082">
    <property type="entry name" value="NUCLEAR HORMONE RECEPTOR"/>
    <property type="match status" value="1"/>
</dbReference>
<dbReference type="Pfam" id="PF00104">
    <property type="entry name" value="Hormone_recep"/>
    <property type="match status" value="1"/>
</dbReference>
<dbReference type="Pfam" id="PF00105">
    <property type="entry name" value="zf-C4"/>
    <property type="match status" value="1"/>
</dbReference>
<dbReference type="PRINTS" id="PR00398">
    <property type="entry name" value="STRDHORMONER"/>
</dbReference>
<dbReference type="PRINTS" id="PR00047">
    <property type="entry name" value="STROIDFINGER"/>
</dbReference>
<dbReference type="PRINTS" id="PR00546">
    <property type="entry name" value="THYROIDHORMR"/>
</dbReference>
<dbReference type="SMART" id="SM00430">
    <property type="entry name" value="HOLI"/>
    <property type="match status" value="1"/>
</dbReference>
<dbReference type="SMART" id="SM00399">
    <property type="entry name" value="ZnF_C4"/>
    <property type="match status" value="1"/>
</dbReference>
<dbReference type="SUPFAM" id="SSF57716">
    <property type="entry name" value="Glucocorticoid receptor-like (DNA-binding domain)"/>
    <property type="match status" value="1"/>
</dbReference>
<dbReference type="SUPFAM" id="SSF48508">
    <property type="entry name" value="Nuclear receptor ligand-binding domain"/>
    <property type="match status" value="1"/>
</dbReference>
<dbReference type="PROSITE" id="PS51843">
    <property type="entry name" value="NR_LBD"/>
    <property type="match status" value="1"/>
</dbReference>
<dbReference type="PROSITE" id="PS00031">
    <property type="entry name" value="NUCLEAR_REC_DBD_1"/>
    <property type="match status" value="1"/>
</dbReference>
<dbReference type="PROSITE" id="PS51030">
    <property type="entry name" value="NUCLEAR_REC_DBD_2"/>
    <property type="match status" value="1"/>
</dbReference>
<gene>
    <name type="primary">NR1H4</name>
</gene>
<organism>
    <name type="scientific">Bos taurus</name>
    <name type="common">Bovine</name>
    <dbReference type="NCBI Taxonomy" id="9913"/>
    <lineage>
        <taxon>Eukaryota</taxon>
        <taxon>Metazoa</taxon>
        <taxon>Chordata</taxon>
        <taxon>Craniata</taxon>
        <taxon>Vertebrata</taxon>
        <taxon>Euteleostomi</taxon>
        <taxon>Mammalia</taxon>
        <taxon>Eutheria</taxon>
        <taxon>Laurasiatheria</taxon>
        <taxon>Artiodactyla</taxon>
        <taxon>Ruminantia</taxon>
        <taxon>Pecora</taxon>
        <taxon>Bovidae</taxon>
        <taxon>Bovinae</taxon>
        <taxon>Bos</taxon>
    </lineage>
</organism>
<sequence>MVMQFQELENPVQISPCHSHTSSGFDMEVMSMKPAKGVLTEQVAGPLGQNLEVEPYSQYNNVQFPQVQPQISSSSYYSNVGFYPQQPEEWYSPGIYELRRMPAETLYQGETEVVEIPITKKARLGASAGRIKGDELCVVCGDRASGYHYNALTCEGCKGFFRRSITKNAVYKCKNGGNCVMDMYMRRKCQECRLRKCKEMGMLAECLLTEIQCKSKRLRKNVKQHADQAIHEDSEGRDLRQVTSTTKSCREKTELTPDQQNLLHYIMDSYSKQRMPQEITNKFLKEEFSAEENFIILTEMATSHVQVLVEFTKKLPGFQTLDHEDQIALLKGSAVEAMFLRSAEIFSKKLPAGHTDLLEERIRKSGISDEYITPMFSFYKSVAELKMTQEEYALLTAIVILSPDRQYIKDREAVEKLQEPLLDVLQKLCKIHQPENPQHFACLLGRLTELRTFNHHHADMLMSWRVNDHKFTPLLCEIWDVQ</sequence>
<comment type="function">
    <text evidence="1 2">Ligand-activated transcription factor. Receptor for bile acids (BAs) such as chenodeoxycholic acid (CDCA), lithocholic acid, deoxycholic acid (DCA) and allocholic acid (ACA). Plays a essential role in BA homeostasis through the regulation of genes involved in BA synthesis, conjugation and enterohepatic circulation. Also regulates lipid and glucose homeostasis and is involved innate immune response. The FXR-RXR heterodimer binds predominantly to farnesoid X receptor response elements (FXREs) containing two inverted repeats of the consensus sequence 5'-AGGTCA-3' in which the monomers are spaced by 1 nucleotide (IR-1) but also to tandem repeat DR1 sites with lower affinity, and can be activated by either FXR or RXR-specific ligands. It is proposed that monomeric nuclear receptors such as NR5A2/LRH-1 bound to coregulatory nuclear responsive element (NRE) halfsites located in close proximity to FXREs modulate transcriptional activity. In the liver activates transcription of the corepressor NR0B2 thereby indirectly inhibiting CYP7A1 and CYP8B1 (involved in BA synthesis) implicating at least in part histone demethylase KDM1A resulting in epigenomic repression, and SLC10A1/NTCP (involved in hepatic uptake of conjugated BAs). Activates transcription of the repressor MAFG (involved in regulation of BA synthesis). Activates transcription of SLC27A5/BACS and BAAT (involved in BA conjugation), ABCB11/BSEP (involved in bile salt export) by directly recruiting histone methyltransferase CARM1, and ABCC2/MRP2 (involved in secretion of conjugated BAs) and ABCB4 (involved in secretion of phosphatidylcholine in the small intestine). Activates transcription of SLC27A5/BACS and BAAT (involved in BA conjugation), ABCB11/BSEP (involved in bile salt export) by directly recruiting histone methyltransferase CARM1, and ABCC2/MRP2 (involved in secretion of conjugated BAs) and ABCB4 (involved in secretion of phosphatidylcholine in the small intestine). In the intestine activates FGF19 expression and secretion leading to hepatic CYP7A1 repression. The function also involves the coordinated induction of hepatic KLB/beta-klotho expression. Regulates transcription of liver UGT2B4 and SULT2A1 involved in BA detoxification; binding to the UGT2B4 promoter seems to imply a monomeric transactivation independent of RXRA. Modulates lipid homeostasis by activating liver NR0B2/SHP-mediated repression of SREBF1 (involved in de novo lipogenesis), expression of PLTP (involved in HDL formation), SCARB1 (involved in HDL hepatic uptake), APOE, APOC1, APOC4, PPARA (involved in beta-oxidation of fatty acids), VLDLR and SDC1 (involved in the hepatic uptake of LDL and IDL remnants), and inhibiting expression of MTTP (involved in VLDL assembly). Increases expression of APOC2 (promoting lipoprotein lipase activity implicated in triglyceride clearance). Transrepresses APOA1 involving a monomeric competition with NR2A1 for binding to a DR1 element. Also reduces triglyceride clearance by inhibiting expression of ANGPTL3 and APOC3 (both involved in inhibition of lipoprotein lipase). Involved in glucose homeostasis by modulating hepatic gluconeogenesis through activation of NR0B2/SHP-mediated repression of respective genes. Modulates glycogen synthesis (inducing phosphorylation of glycogen synthase kinase-3). Modulates glucose-stimulated insulin secretion and is involved in insulin resistance. Involved in intestinal innate immunity. Plays a role in protecting the distal small intestine against bacterial overgrowth and preservation of the epithelial barrier. Down-regulates inflammatory cytokine expression in several types of immune cells including macrophages and mononuclear cells. Mediates trans-repression of TLR4-induced cytokine expression; the function seems to require its sumoylation and prevents N-CoR nuclear receptor corepressor clearance from target genes such as IL1B and NOS2. Involved in the TLR9-mediated protective mechanism in intestinal inflammation. Plays an anti-inflammatory role in liver inflammation; proposed to inhibit pro-inflammatory (but not antiapoptotic) NF-kappa-B signaling.</text>
</comment>
<comment type="subunit">
    <text evidence="1 2">Heterodimer with RXRA; the heterodimerization enhances the binding affinity for LXXLL motifs from coactivators (By similarity). Binds DNA predominantly as a heterodimer with RXRA. After activation by agonist binding interacts with coactivators. Interacts with NCOA1, NCOA2, PPARGC1A, CARM1, SETD7, PRMT1, GPS2, SMARCA4 and MED1, EP300 and SMARCD1. Interacts with XRCC5 and XRCC6; decreasing NR1H4/FXR transactivation activity towards ABCB11/BSEP. Interacts with PAGR1 AND NCOA6; indicative for an association with an MLL2/MLL3 complex (ASCOM).</text>
</comment>
<comment type="subcellular location">
    <subcellularLocation>
        <location evidence="6">Nucleus</location>
    </subcellularLocation>
</comment>
<comment type="PTM">
    <text evidence="2">Acetylated by EP300. Lys-223 as is the major acetylation site for EP300; the dynamicly regulated acetylation inhibits heterodimerization with RXRA and transactivation activity. Deacetylated by SIRT1.</text>
</comment>
<comment type="PTM">
    <text evidence="2">Methylation may increase transactivation of target genes.</text>
</comment>
<comment type="PTM">
    <text evidence="2">Phosphorylation by PKC/PRKCA increases transactivation activity by promoting association with PPARGC1A.</text>
</comment>
<comment type="PTM">
    <text evidence="2">Sumoylated upon ligand binding.</text>
</comment>
<comment type="similarity">
    <text evidence="6">Belongs to the nuclear hormone receptor family. NR1 subfamily.</text>
</comment>
<accession>Q3SZL0</accession>
<proteinExistence type="evidence at transcript level"/>
<keyword id="KW-0007">Acetylation</keyword>
<keyword id="KW-0010">Activator</keyword>
<keyword id="KW-0238">DNA-binding</keyword>
<keyword id="KW-0391">Immunity</keyword>
<keyword id="KW-0395">Inflammatory response</keyword>
<keyword id="KW-0399">Innate immunity</keyword>
<keyword id="KW-1017">Isopeptide bond</keyword>
<keyword id="KW-0479">Metal-binding</keyword>
<keyword id="KW-0488">Methylation</keyword>
<keyword id="KW-0539">Nucleus</keyword>
<keyword id="KW-0597">Phosphoprotein</keyword>
<keyword id="KW-0675">Receptor</keyword>
<keyword id="KW-1185">Reference proteome</keyword>
<keyword id="KW-0678">Repressor</keyword>
<keyword id="KW-0804">Transcription</keyword>
<keyword id="KW-0805">Transcription regulation</keyword>
<keyword id="KW-0832">Ubl conjugation</keyword>
<keyword id="KW-0862">Zinc</keyword>
<keyword id="KW-0863">Zinc-finger</keyword>
<feature type="chain" id="PRO_0000283809" description="Bile acid receptor">
    <location>
        <begin position="1"/>
        <end position="482"/>
    </location>
</feature>
<feature type="domain" description="NR LBD" evidence="4">
    <location>
        <begin position="258"/>
        <end position="482"/>
    </location>
</feature>
<feature type="DNA-binding region" description="Nuclear receptor" evidence="3">
    <location>
        <begin position="134"/>
        <end position="209"/>
    </location>
</feature>
<feature type="zinc finger region" description="NR C4-type" evidence="3">
    <location>
        <begin position="137"/>
        <end position="157"/>
    </location>
</feature>
<feature type="zinc finger region" description="NR C4-type" evidence="3">
    <location>
        <begin position="173"/>
        <end position="197"/>
    </location>
</feature>
<feature type="region of interest" description="Disordered" evidence="5">
    <location>
        <begin position="229"/>
        <end position="253"/>
    </location>
</feature>
<feature type="compositionally biased region" description="Basic and acidic residues" evidence="5">
    <location>
        <begin position="229"/>
        <end position="240"/>
    </location>
</feature>
<feature type="binding site" evidence="2">
    <location>
        <position position="341"/>
    </location>
    <ligand>
        <name>chenodeoxycholate</name>
        <dbReference type="ChEBI" id="CHEBI:36234"/>
        <note>agonist</note>
    </ligand>
</feature>
<feature type="binding site" evidence="2">
    <location>
        <position position="371"/>
    </location>
    <ligand>
        <name>chenodeoxycholate</name>
        <dbReference type="ChEBI" id="CHEBI:36234"/>
        <note>agonist</note>
    </ligand>
</feature>
<feature type="binding site" evidence="2">
    <location>
        <position position="379"/>
    </location>
    <ligand>
        <name>chenodeoxycholate</name>
        <dbReference type="ChEBI" id="CHEBI:36234"/>
        <note>agonist</note>
    </ligand>
</feature>
<feature type="binding site" evidence="2">
    <location>
        <position position="457"/>
    </location>
    <ligand>
        <name>chenodeoxycholate</name>
        <dbReference type="ChEBI" id="CHEBI:36234"/>
        <note>agonist</note>
    </ligand>
</feature>
<feature type="modified residue" description="Phosphoserine; by PKC/PRKCA" evidence="2">
    <location>
        <position position="145"/>
    </location>
</feature>
<feature type="modified residue" description="Phosphoserine; by PKC/PRKCA" evidence="2">
    <location>
        <position position="164"/>
    </location>
</feature>
<feature type="modified residue" description="N6-acetyllysine; by EP300" evidence="2">
    <location>
        <position position="167"/>
    </location>
</feature>
<feature type="modified residue" description="N6-methyllysine; by SETD7" evidence="2">
    <location>
        <position position="216"/>
    </location>
</feature>
<feature type="modified residue" description="N6-acetyllysine; by EP300" evidence="2">
    <location>
        <position position="223"/>
    </location>
</feature>
<feature type="modified residue" description="Phosphothreonine; by PKC/PRKCZ" evidence="2">
    <location>
        <position position="452"/>
    </location>
</feature>
<feature type="cross-link" description="Glycyl lysine isopeptide (Lys-Gly) (interchain with G-Cter in SUMO1)" evidence="2">
    <location>
        <position position="132"/>
    </location>
</feature>
<feature type="cross-link" description="Glycyl lysine isopeptide (Lys-Gly) (interchain with G-Cter in SUMO1)" evidence="2">
    <location>
        <position position="285"/>
    </location>
</feature>
<protein>
    <recommendedName>
        <fullName>Bile acid receptor</fullName>
    </recommendedName>
    <alternativeName>
        <fullName>Farnesoid X-activated receptor</fullName>
    </alternativeName>
    <alternativeName>
        <fullName>Farnesol receptor HRR-1</fullName>
    </alternativeName>
    <alternativeName>
        <fullName>Nuclear receptor subfamily 1 group H member 4</fullName>
    </alternativeName>
</protein>
<name>NR1H4_BOVIN</name>
<reference key="1">
    <citation type="submission" date="2005-08" db="EMBL/GenBank/DDBJ databases">
        <authorList>
            <consortium name="NIH - Mammalian Gene Collection (MGC) project"/>
        </authorList>
    </citation>
    <scope>NUCLEOTIDE SEQUENCE [LARGE SCALE MRNA]</scope>
    <source>
        <strain>Crossbred X Angus</strain>
        <tissue>Ileum</tissue>
    </source>
</reference>